<evidence type="ECO:0000255" key="1">
    <source>
        <dbReference type="HAMAP-Rule" id="MF_00072"/>
    </source>
</evidence>
<sequence>MSEYLQQIAKRRTFAIISHPDAGKTTITEKMLLFGNAIKTAGTVKAKKSGIHATSDWMEMEKQRGISITTSVMQFPYNGRIINLLDTPGHEDFSEDTYRTLTAVDSALMVVDAVKGVEDRTIKLMNVCRLRDTPIVTFMNKFDRDTRDPLELLDEVENILKIKCAPINWPIGMGKYFKGVYDLYNDEVTLFETGHGHEIYPYKKIKGLANAKDAIGIDLYEDLEMEIDLVRGASHEFDEQEFLEGNLTPVYFGTALSNFGVKEMMDGFTRYAPAPQHREADQRVVAADEQKLTGFVFKIQANMDEKHRNRIAFFRICSGKYEKGMKIFHERTGKQMQISKALTFMAGEREQVEEGYAGDIIGLHNHGSIQIGDSFTQGEKLKFKGIPNFAPEIFKRVKLNDPLKMKALQKGLVQLSEEGATQVFKPFISNDLVLGAVGVLQFDVVAQRLASEYNVKCSYEGVNVTLARWIFCNDEKKLNDFKKKYEVNLAYDGAGYLTYLAPTGVNLQLAQEKNPDIIFSATREH</sequence>
<feature type="chain" id="PRO_0000242178" description="Peptide chain release factor 3">
    <location>
        <begin position="1"/>
        <end position="525"/>
    </location>
</feature>
<feature type="domain" description="tr-type G">
    <location>
        <begin position="9"/>
        <end position="276"/>
    </location>
</feature>
<feature type="binding site" evidence="1">
    <location>
        <begin position="18"/>
        <end position="25"/>
    </location>
    <ligand>
        <name>GTP</name>
        <dbReference type="ChEBI" id="CHEBI:37565"/>
    </ligand>
</feature>
<feature type="binding site" evidence="1">
    <location>
        <begin position="86"/>
        <end position="90"/>
    </location>
    <ligand>
        <name>GTP</name>
        <dbReference type="ChEBI" id="CHEBI:37565"/>
    </ligand>
</feature>
<feature type="binding site" evidence="1">
    <location>
        <begin position="140"/>
        <end position="143"/>
    </location>
    <ligand>
        <name>GTP</name>
        <dbReference type="ChEBI" id="CHEBI:37565"/>
    </ligand>
</feature>
<name>RF3_FRATT</name>
<organism>
    <name type="scientific">Francisella tularensis subsp. tularensis (strain SCHU S4 / Schu 4)</name>
    <dbReference type="NCBI Taxonomy" id="177416"/>
    <lineage>
        <taxon>Bacteria</taxon>
        <taxon>Pseudomonadati</taxon>
        <taxon>Pseudomonadota</taxon>
        <taxon>Gammaproteobacteria</taxon>
        <taxon>Thiotrichales</taxon>
        <taxon>Francisellaceae</taxon>
        <taxon>Francisella</taxon>
    </lineage>
</organism>
<dbReference type="EMBL" id="AJ749949">
    <property type="protein sequence ID" value="CAG44751.1"/>
    <property type="molecule type" value="Genomic_DNA"/>
</dbReference>
<dbReference type="RefSeq" id="WP_003019866.1">
    <property type="nucleotide sequence ID" value="NC_006570.2"/>
</dbReference>
<dbReference type="RefSeq" id="YP_169188.1">
    <property type="nucleotide sequence ID" value="NC_006570.2"/>
</dbReference>
<dbReference type="SMR" id="Q5NIF4"/>
<dbReference type="IntAct" id="Q5NIF4">
    <property type="interactions" value="4"/>
</dbReference>
<dbReference type="STRING" id="177416.FTT_0118"/>
<dbReference type="DNASU" id="3191238"/>
<dbReference type="EnsemblBacteria" id="CAG44751">
    <property type="protein sequence ID" value="CAG44751"/>
    <property type="gene ID" value="FTT_0118"/>
</dbReference>
<dbReference type="KEGG" id="ftu:FTT_0118"/>
<dbReference type="eggNOG" id="COG4108">
    <property type="taxonomic scope" value="Bacteria"/>
</dbReference>
<dbReference type="OrthoDB" id="5619066at2"/>
<dbReference type="Proteomes" id="UP000001174">
    <property type="component" value="Chromosome"/>
</dbReference>
<dbReference type="GO" id="GO:0005829">
    <property type="term" value="C:cytosol"/>
    <property type="evidence" value="ECO:0007669"/>
    <property type="project" value="TreeGrafter"/>
</dbReference>
<dbReference type="GO" id="GO:0005525">
    <property type="term" value="F:GTP binding"/>
    <property type="evidence" value="ECO:0007669"/>
    <property type="project" value="UniProtKB-UniRule"/>
</dbReference>
<dbReference type="GO" id="GO:0003924">
    <property type="term" value="F:GTPase activity"/>
    <property type="evidence" value="ECO:0007669"/>
    <property type="project" value="InterPro"/>
</dbReference>
<dbReference type="GO" id="GO:0097216">
    <property type="term" value="F:guanosine tetraphosphate binding"/>
    <property type="evidence" value="ECO:0007669"/>
    <property type="project" value="UniProtKB-ARBA"/>
</dbReference>
<dbReference type="GO" id="GO:0016150">
    <property type="term" value="F:translation release factor activity, codon nonspecific"/>
    <property type="evidence" value="ECO:0007669"/>
    <property type="project" value="TreeGrafter"/>
</dbReference>
<dbReference type="GO" id="GO:0016149">
    <property type="term" value="F:translation release factor activity, codon specific"/>
    <property type="evidence" value="ECO:0007669"/>
    <property type="project" value="UniProtKB-UniRule"/>
</dbReference>
<dbReference type="GO" id="GO:0006449">
    <property type="term" value="P:regulation of translational termination"/>
    <property type="evidence" value="ECO:0007669"/>
    <property type="project" value="UniProtKB-UniRule"/>
</dbReference>
<dbReference type="CDD" id="cd04169">
    <property type="entry name" value="RF3"/>
    <property type="match status" value="1"/>
</dbReference>
<dbReference type="CDD" id="cd16259">
    <property type="entry name" value="RF3_III"/>
    <property type="match status" value="1"/>
</dbReference>
<dbReference type="FunFam" id="2.40.30.10:FF:000040">
    <property type="entry name" value="Peptide chain release factor 3"/>
    <property type="match status" value="1"/>
</dbReference>
<dbReference type="FunFam" id="3.30.70.3280:FF:000001">
    <property type="entry name" value="Peptide chain release factor 3"/>
    <property type="match status" value="1"/>
</dbReference>
<dbReference type="FunFam" id="3.40.50.300:FF:000542">
    <property type="entry name" value="Peptide chain release factor 3"/>
    <property type="match status" value="1"/>
</dbReference>
<dbReference type="Gene3D" id="3.40.50.300">
    <property type="entry name" value="P-loop containing nucleotide triphosphate hydrolases"/>
    <property type="match status" value="1"/>
</dbReference>
<dbReference type="Gene3D" id="3.30.70.3280">
    <property type="entry name" value="Peptide chain release factor 3, domain III"/>
    <property type="match status" value="1"/>
</dbReference>
<dbReference type="Gene3D" id="2.40.30.10">
    <property type="entry name" value="Translation factors"/>
    <property type="match status" value="1"/>
</dbReference>
<dbReference type="HAMAP" id="MF_00072">
    <property type="entry name" value="Rel_fac_3"/>
    <property type="match status" value="1"/>
</dbReference>
<dbReference type="InterPro" id="IPR053905">
    <property type="entry name" value="EF-G-like_DII"/>
</dbReference>
<dbReference type="InterPro" id="IPR035647">
    <property type="entry name" value="EFG_III/V"/>
</dbReference>
<dbReference type="InterPro" id="IPR031157">
    <property type="entry name" value="G_TR_CS"/>
</dbReference>
<dbReference type="InterPro" id="IPR027417">
    <property type="entry name" value="P-loop_NTPase"/>
</dbReference>
<dbReference type="InterPro" id="IPR004548">
    <property type="entry name" value="PrfC"/>
</dbReference>
<dbReference type="InterPro" id="IPR032090">
    <property type="entry name" value="RF3_C"/>
</dbReference>
<dbReference type="InterPro" id="IPR038467">
    <property type="entry name" value="RF3_dom_3_sf"/>
</dbReference>
<dbReference type="InterPro" id="IPR041732">
    <property type="entry name" value="RF3_GTP-bd"/>
</dbReference>
<dbReference type="InterPro" id="IPR005225">
    <property type="entry name" value="Small_GTP-bd"/>
</dbReference>
<dbReference type="InterPro" id="IPR000795">
    <property type="entry name" value="T_Tr_GTP-bd_dom"/>
</dbReference>
<dbReference type="InterPro" id="IPR009000">
    <property type="entry name" value="Transl_B-barrel_sf"/>
</dbReference>
<dbReference type="NCBIfam" id="TIGR00503">
    <property type="entry name" value="prfC"/>
    <property type="match status" value="1"/>
</dbReference>
<dbReference type="NCBIfam" id="NF001964">
    <property type="entry name" value="PRK00741.1"/>
    <property type="match status" value="1"/>
</dbReference>
<dbReference type="NCBIfam" id="TIGR00231">
    <property type="entry name" value="small_GTP"/>
    <property type="match status" value="1"/>
</dbReference>
<dbReference type="PANTHER" id="PTHR43556">
    <property type="entry name" value="PEPTIDE CHAIN RELEASE FACTOR RF3"/>
    <property type="match status" value="1"/>
</dbReference>
<dbReference type="PANTHER" id="PTHR43556:SF2">
    <property type="entry name" value="PEPTIDE CHAIN RELEASE FACTOR RF3"/>
    <property type="match status" value="1"/>
</dbReference>
<dbReference type="Pfam" id="PF22042">
    <property type="entry name" value="EF-G_D2"/>
    <property type="match status" value="1"/>
</dbReference>
<dbReference type="Pfam" id="PF00009">
    <property type="entry name" value="GTP_EFTU"/>
    <property type="match status" value="1"/>
</dbReference>
<dbReference type="Pfam" id="PF16658">
    <property type="entry name" value="RF3_C"/>
    <property type="match status" value="1"/>
</dbReference>
<dbReference type="PRINTS" id="PR00315">
    <property type="entry name" value="ELONGATNFCT"/>
</dbReference>
<dbReference type="SUPFAM" id="SSF54980">
    <property type="entry name" value="EF-G C-terminal domain-like"/>
    <property type="match status" value="1"/>
</dbReference>
<dbReference type="SUPFAM" id="SSF52540">
    <property type="entry name" value="P-loop containing nucleoside triphosphate hydrolases"/>
    <property type="match status" value="1"/>
</dbReference>
<dbReference type="SUPFAM" id="SSF50447">
    <property type="entry name" value="Translation proteins"/>
    <property type="match status" value="1"/>
</dbReference>
<dbReference type="PROSITE" id="PS00301">
    <property type="entry name" value="G_TR_1"/>
    <property type="match status" value="1"/>
</dbReference>
<dbReference type="PROSITE" id="PS51722">
    <property type="entry name" value="G_TR_2"/>
    <property type="match status" value="1"/>
</dbReference>
<reference key="1">
    <citation type="journal article" date="2005" name="Nat. Genet.">
        <title>The complete genome sequence of Francisella tularensis, the causative agent of tularemia.</title>
        <authorList>
            <person name="Larsson P."/>
            <person name="Oyston P.C.F."/>
            <person name="Chain P."/>
            <person name="Chu M.C."/>
            <person name="Duffield M."/>
            <person name="Fuxelius H.-H."/>
            <person name="Garcia E."/>
            <person name="Haelltorp G."/>
            <person name="Johansson D."/>
            <person name="Isherwood K.E."/>
            <person name="Karp P.D."/>
            <person name="Larsson E."/>
            <person name="Liu Y."/>
            <person name="Michell S."/>
            <person name="Prior J."/>
            <person name="Prior R."/>
            <person name="Malfatti S."/>
            <person name="Sjoestedt A."/>
            <person name="Svensson K."/>
            <person name="Thompson N."/>
            <person name="Vergez L."/>
            <person name="Wagg J.K."/>
            <person name="Wren B.W."/>
            <person name="Lindler L.E."/>
            <person name="Andersson S.G.E."/>
            <person name="Forsman M."/>
            <person name="Titball R.W."/>
        </authorList>
    </citation>
    <scope>NUCLEOTIDE SEQUENCE [LARGE SCALE GENOMIC DNA]</scope>
    <source>
        <strain>SCHU S4 / Schu 4</strain>
    </source>
</reference>
<gene>
    <name evidence="1" type="primary">prfC</name>
    <name type="ordered locus">FTT_0118</name>
</gene>
<comment type="function">
    <text evidence="1">Increases the formation of ribosomal termination complexes and stimulates activities of RF-1 and RF-2. It binds guanine nucleotides and has strong preference for UGA stop codons. It may interact directly with the ribosome. The stimulation of RF-1 and RF-2 is significantly reduced by GTP and GDP, but not by GMP.</text>
</comment>
<comment type="subcellular location">
    <subcellularLocation>
        <location evidence="1">Cytoplasm</location>
    </subcellularLocation>
</comment>
<comment type="similarity">
    <text evidence="1">Belongs to the TRAFAC class translation factor GTPase superfamily. Classic translation factor GTPase family. PrfC subfamily.</text>
</comment>
<accession>Q5NIF4</accession>
<keyword id="KW-0963">Cytoplasm</keyword>
<keyword id="KW-0342">GTP-binding</keyword>
<keyword id="KW-0547">Nucleotide-binding</keyword>
<keyword id="KW-0648">Protein biosynthesis</keyword>
<keyword id="KW-1185">Reference proteome</keyword>
<protein>
    <recommendedName>
        <fullName evidence="1">Peptide chain release factor 3</fullName>
        <shortName evidence="1">RF-3</shortName>
    </recommendedName>
</protein>
<proteinExistence type="inferred from homology"/>